<evidence type="ECO:0000250" key="1">
    <source>
        <dbReference type="UniProtKB" id="P22337"/>
    </source>
</evidence>
<evidence type="ECO:0000250" key="2">
    <source>
        <dbReference type="UniProtKB" id="P9WNZ5"/>
    </source>
</evidence>
<evidence type="ECO:0000256" key="3">
    <source>
        <dbReference type="SAM" id="MobiDB-lite"/>
    </source>
</evidence>
<evidence type="ECO:0000269" key="4">
    <source>
    </source>
</evidence>
<evidence type="ECO:0000303" key="5">
    <source>
    </source>
</evidence>
<evidence type="ECO:0000303" key="6">
    <source>
    </source>
</evidence>
<evidence type="ECO:0000305" key="7"/>
<evidence type="ECO:0000305" key="8">
    <source>
    </source>
</evidence>
<evidence type="ECO:0000305" key="9">
    <source>
    </source>
</evidence>
<evidence type="ECO:0000305" key="10">
    <source>
    </source>
</evidence>
<protein>
    <recommendedName>
        <fullName evidence="5">Putative acyl-[acyl-carrier-protein] desaturase DesA1</fullName>
        <shortName evidence="5">Putative acyl-ACP desaturase DesA1</shortName>
        <ecNumber evidence="8">1.14.19.-</ecNumber>
    </recommendedName>
</protein>
<gene>
    <name evidence="5" type="primary">desA1</name>
    <name evidence="6" type="synonym">des</name>
    <name type="ordered locus">Rv0824c</name>
</gene>
<dbReference type="EC" id="1.14.19.-" evidence="8"/>
<dbReference type="EMBL" id="U49839">
    <property type="protein sequence ID" value="AAB86440.1"/>
    <property type="molecule type" value="Genomic_DNA"/>
</dbReference>
<dbReference type="EMBL" id="AL123456">
    <property type="protein sequence ID" value="CCP43572.1"/>
    <property type="molecule type" value="Genomic_DNA"/>
</dbReference>
<dbReference type="PIR" id="H70810">
    <property type="entry name" value="H70810"/>
</dbReference>
<dbReference type="RefSeq" id="WP_003404321.1">
    <property type="nucleotide sequence ID" value="NZ_NVQJ01000066.1"/>
</dbReference>
<dbReference type="RefSeq" id="YP_177758.1">
    <property type="nucleotide sequence ID" value="NC_000962.3"/>
</dbReference>
<dbReference type="SMR" id="P9WNZ7"/>
<dbReference type="FunCoup" id="P9WNZ7">
    <property type="interactions" value="54"/>
</dbReference>
<dbReference type="STRING" id="83332.Rv0824c"/>
<dbReference type="PaxDb" id="83332-Rv0824c"/>
<dbReference type="DNASU" id="885444"/>
<dbReference type="GeneID" id="45424787"/>
<dbReference type="GeneID" id="885444"/>
<dbReference type="KEGG" id="mtu:Rv0824c"/>
<dbReference type="KEGG" id="mtv:RVBD_0824c"/>
<dbReference type="TubercuList" id="Rv0824c"/>
<dbReference type="eggNOG" id="COG0208">
    <property type="taxonomic scope" value="Bacteria"/>
</dbReference>
<dbReference type="InParanoid" id="P9WNZ7"/>
<dbReference type="OrthoDB" id="9772881at2"/>
<dbReference type="PhylomeDB" id="P9WNZ7"/>
<dbReference type="BRENDA" id="1.14.19.2">
    <property type="organism ID" value="3445"/>
</dbReference>
<dbReference type="UniPathway" id="UPA00199"/>
<dbReference type="Proteomes" id="UP000001584">
    <property type="component" value="Chromosome"/>
</dbReference>
<dbReference type="GO" id="GO:0009986">
    <property type="term" value="C:cell surface"/>
    <property type="evidence" value="ECO:0007669"/>
    <property type="project" value="UniProtKB-SubCell"/>
</dbReference>
<dbReference type="GO" id="GO:0005829">
    <property type="term" value="C:cytosol"/>
    <property type="evidence" value="ECO:0007005"/>
    <property type="project" value="MTBBASE"/>
</dbReference>
<dbReference type="GO" id="GO:0009274">
    <property type="term" value="C:peptidoglycan-based cell wall"/>
    <property type="evidence" value="ECO:0007005"/>
    <property type="project" value="MTBBASE"/>
</dbReference>
<dbReference type="GO" id="GO:0005886">
    <property type="term" value="C:plasma membrane"/>
    <property type="evidence" value="ECO:0007005"/>
    <property type="project" value="MTBBASE"/>
</dbReference>
<dbReference type="GO" id="GO:0046872">
    <property type="term" value="F:metal ion binding"/>
    <property type="evidence" value="ECO:0000318"/>
    <property type="project" value="GO_Central"/>
</dbReference>
<dbReference type="GO" id="GO:0045300">
    <property type="term" value="F:stearoyl-[ACP] desaturase activity"/>
    <property type="evidence" value="ECO:0007669"/>
    <property type="project" value="InterPro"/>
</dbReference>
<dbReference type="GO" id="GO:0006633">
    <property type="term" value="P:fatty acid biosynthetic process"/>
    <property type="evidence" value="ECO:0007669"/>
    <property type="project" value="UniProtKB-KW"/>
</dbReference>
<dbReference type="CDD" id="cd01050">
    <property type="entry name" value="Acyl_ACP_Desat"/>
    <property type="match status" value="1"/>
</dbReference>
<dbReference type="FunFam" id="1.10.620.20:FF:000006">
    <property type="entry name" value="Acyl-ACP desaturase DesA"/>
    <property type="match status" value="1"/>
</dbReference>
<dbReference type="Gene3D" id="1.10.620.20">
    <property type="entry name" value="Ribonucleotide Reductase, subunit A"/>
    <property type="match status" value="1"/>
</dbReference>
<dbReference type="InterPro" id="IPR005067">
    <property type="entry name" value="Fatty_acid_desaturase-2"/>
</dbReference>
<dbReference type="InterPro" id="IPR009078">
    <property type="entry name" value="Ferritin-like_SF"/>
</dbReference>
<dbReference type="InterPro" id="IPR012348">
    <property type="entry name" value="RNR-like"/>
</dbReference>
<dbReference type="PANTHER" id="PTHR31155">
    <property type="entry name" value="ACYL- ACYL-CARRIER-PROTEIN DESATURASE-RELATED"/>
    <property type="match status" value="1"/>
</dbReference>
<dbReference type="PANTHER" id="PTHR31155:SF9">
    <property type="entry name" value="STEAROYL-[ACYL-CARRIER-PROTEIN] 9-DESATURASE 7, CHLOROPLASTIC"/>
    <property type="match status" value="1"/>
</dbReference>
<dbReference type="Pfam" id="PF03405">
    <property type="entry name" value="FA_desaturase_2"/>
    <property type="match status" value="1"/>
</dbReference>
<dbReference type="PIRSF" id="PIRSF000346">
    <property type="entry name" value="Dlt9_acylACP_des"/>
    <property type="match status" value="1"/>
</dbReference>
<dbReference type="SUPFAM" id="SSF47240">
    <property type="entry name" value="Ferritin-like"/>
    <property type="match status" value="1"/>
</dbReference>
<sequence>MSAKLTDLQLLHELEPVVEKYLNRHLSMHKPWNPHDYIPWSDGKNYYALGGQDWDPDQSKLSDVAQVAMVQNLVTEDNLPSYHREIAMNMGMDGAWGQWVNRWTAEENRHGIALRDYLVVTRSVDPVELEKLRLEVVNRGFSPGQNHQGHYFAESLTDSVLYVSFQELATRISHRNTGKACNDPVADQLMAKISADENLHMIFYRDVSEAAFDLVPNQAMKSLHLILSHFQMPGFQVPEFRRKAVVIAVGGVYDPRIHLDEVVMPVLKKWRIFEREDFTGEGAKLRDELALVIKDLELACDKFEVSKQRQLDREARTGKKVSAHELHKTAGKLAMSRR</sequence>
<feature type="chain" id="PRO_0000392675" description="Putative acyl-[acyl-carrier-protein] desaturase DesA1">
    <location>
        <begin position="1"/>
        <end position="338"/>
    </location>
</feature>
<feature type="region of interest" description="Disordered" evidence="3">
    <location>
        <begin position="314"/>
        <end position="338"/>
    </location>
</feature>
<feature type="compositionally biased region" description="Basic and acidic residues" evidence="3">
    <location>
        <begin position="314"/>
        <end position="328"/>
    </location>
</feature>
<feature type="binding site" evidence="1">
    <location>
        <position position="76"/>
    </location>
    <ligand>
        <name>Fe cation</name>
        <dbReference type="ChEBI" id="CHEBI:24875"/>
        <label>1</label>
    </ligand>
</feature>
<feature type="binding site" evidence="1">
    <location>
        <position position="107"/>
    </location>
    <ligand>
        <name>Fe cation</name>
        <dbReference type="ChEBI" id="CHEBI:24875"/>
        <label>1</label>
    </ligand>
</feature>
<feature type="binding site" evidence="1">
    <location>
        <position position="107"/>
    </location>
    <ligand>
        <name>Fe cation</name>
        <dbReference type="ChEBI" id="CHEBI:24875"/>
        <label>2</label>
    </ligand>
</feature>
<feature type="binding site" evidence="1">
    <location>
        <position position="110"/>
    </location>
    <ligand>
        <name>Fe cation</name>
        <dbReference type="ChEBI" id="CHEBI:24875"/>
        <label>1</label>
    </ligand>
</feature>
<feature type="binding site" evidence="1">
    <location>
        <position position="167"/>
    </location>
    <ligand>
        <name>Fe cation</name>
        <dbReference type="ChEBI" id="CHEBI:24875"/>
        <label>2</label>
    </ligand>
</feature>
<feature type="binding site" evidence="1">
    <location>
        <position position="197"/>
    </location>
    <ligand>
        <name>Fe cation</name>
        <dbReference type="ChEBI" id="CHEBI:24875"/>
        <label>1</label>
    </ligand>
</feature>
<feature type="binding site" evidence="1">
    <location>
        <position position="197"/>
    </location>
    <ligand>
        <name>Fe cation</name>
        <dbReference type="ChEBI" id="CHEBI:24875"/>
        <label>2</label>
    </ligand>
</feature>
<feature type="binding site" evidence="1">
    <location>
        <position position="200"/>
    </location>
    <ligand>
        <name>Fe cation</name>
        <dbReference type="ChEBI" id="CHEBI:24875"/>
        <label>2</label>
    </ligand>
</feature>
<reference key="1">
    <citation type="journal article" date="1997" name="Infect. Immun.">
        <title>Mycobacterium tuberculosis Des protein: an immunodominant target for the humoral response of tuberculous patients.</title>
        <authorList>
            <person name="Jackson M."/>
            <person name="Portnoi D."/>
            <person name="Catheline D."/>
            <person name="Dumail L."/>
            <person name="Rauzier J."/>
            <person name="Legrand P."/>
            <person name="Gicquel B."/>
        </authorList>
    </citation>
    <scope>NUCLEOTIDE SEQUENCE [GENOMIC DNA]</scope>
    <scope>ANTIGENICITY</scope>
    <scope>SUBCELLULAR LOCATION</scope>
    <source>
        <strain>H37Rv</strain>
    </source>
</reference>
<reference key="2">
    <citation type="journal article" date="1998" name="Nature">
        <title>Deciphering the biology of Mycobacterium tuberculosis from the complete genome sequence.</title>
        <authorList>
            <person name="Cole S.T."/>
            <person name="Brosch R."/>
            <person name="Parkhill J."/>
            <person name="Garnier T."/>
            <person name="Churcher C.M."/>
            <person name="Harris D.E."/>
            <person name="Gordon S.V."/>
            <person name="Eiglmeier K."/>
            <person name="Gas S."/>
            <person name="Barry C.E. III"/>
            <person name="Tekaia F."/>
            <person name="Badcock K."/>
            <person name="Basham D."/>
            <person name="Brown D."/>
            <person name="Chillingworth T."/>
            <person name="Connor R."/>
            <person name="Davies R.M."/>
            <person name="Devlin K."/>
            <person name="Feltwell T."/>
            <person name="Gentles S."/>
            <person name="Hamlin N."/>
            <person name="Holroyd S."/>
            <person name="Hornsby T."/>
            <person name="Jagels K."/>
            <person name="Krogh A."/>
            <person name="McLean J."/>
            <person name="Moule S."/>
            <person name="Murphy L.D."/>
            <person name="Oliver S."/>
            <person name="Osborne J."/>
            <person name="Quail M.A."/>
            <person name="Rajandream M.A."/>
            <person name="Rogers J."/>
            <person name="Rutter S."/>
            <person name="Seeger K."/>
            <person name="Skelton S."/>
            <person name="Squares S."/>
            <person name="Squares R."/>
            <person name="Sulston J.E."/>
            <person name="Taylor K."/>
            <person name="Whitehead S."/>
            <person name="Barrell B.G."/>
        </authorList>
    </citation>
    <scope>NUCLEOTIDE SEQUENCE [LARGE SCALE GENOMIC DNA]</scope>
    <source>
        <strain>ATCC 25618 / H37Rv</strain>
    </source>
</reference>
<reference key="3">
    <citation type="journal article" date="2002" name="Microbiology">
        <title>Re-annotation of the genome sequence of Mycobacterium tuberculosis H37Rv.</title>
        <authorList>
            <person name="Camus J.-C."/>
            <person name="Pryor M.J."/>
            <person name="Medigue C."/>
            <person name="Cole S.T."/>
        </authorList>
    </citation>
    <scope>SEQUENCE REVISION</scope>
    <source>
        <strain>ATCC 25618 / H37Rv</strain>
    </source>
</reference>
<reference key="4">
    <citation type="journal article" date="2003" name="J. Biol. Chem.">
        <title>Unique mechanism of action of the thiourea drug isoxyl on Mycobacterium tuberculosis.</title>
        <authorList>
            <person name="Phetsuksiri B."/>
            <person name="Jackson M."/>
            <person name="Scherman H."/>
            <person name="McNeil M."/>
            <person name="Besra G.S."/>
            <person name="Baulard A.R."/>
            <person name="Slayden R.A."/>
            <person name="DeBarber A.E."/>
            <person name="Barry C.E. III"/>
            <person name="Baird M.S."/>
            <person name="Crick D.C."/>
            <person name="Brennan P.J."/>
        </authorList>
    </citation>
    <scope>PUTATIVE FUNCTION</scope>
    <source>
        <strain>ATCC 25618 / H37Rv</strain>
    </source>
</reference>
<reference key="5">
    <citation type="journal article" date="2008" name="BMC Syst. Biol.">
        <title>targetTB: a target identification pipeline for Mycobacterium tuberculosis through an interactome, reactome and genome-scale structural analysis.</title>
        <authorList>
            <person name="Raman K."/>
            <person name="Yeturu K."/>
            <person name="Chandra N."/>
        </authorList>
    </citation>
    <scope>IDENTIFICATION AS A DRUG TARGET [LARGE SCALE ANALYSIS]</scope>
</reference>
<reference key="6">
    <citation type="journal article" date="2011" name="Mol. Cell. Proteomics">
        <title>Proteogenomic analysis of Mycobacterium tuberculosis by high resolution mass spectrometry.</title>
        <authorList>
            <person name="Kelkar D.S."/>
            <person name="Kumar D."/>
            <person name="Kumar P."/>
            <person name="Balakrishnan L."/>
            <person name="Muthusamy B."/>
            <person name="Yadav A.K."/>
            <person name="Shrivastava P."/>
            <person name="Marimuthu A."/>
            <person name="Anand S."/>
            <person name="Sundaram H."/>
            <person name="Kingsbury R."/>
            <person name="Harsha H.C."/>
            <person name="Nair B."/>
            <person name="Prasad T.S."/>
            <person name="Chauhan D.S."/>
            <person name="Katoch K."/>
            <person name="Katoch V.M."/>
            <person name="Kumar P."/>
            <person name="Chaerkady R."/>
            <person name="Ramachandran S."/>
            <person name="Dash D."/>
            <person name="Pandey A."/>
        </authorList>
    </citation>
    <scope>IDENTIFICATION BY MASS SPECTROMETRY [LARGE SCALE ANALYSIS]</scope>
    <source>
        <strain>ATCC 25618 / H37Rv</strain>
    </source>
</reference>
<name>DESA1_MYCTU</name>
<comment type="function">
    <text evidence="8">May be a desaturase involved in mycobacterial fatty acid biosynthesis.</text>
</comment>
<comment type="cofactor">
    <cofactor evidence="1">
        <name>Fe(2+)</name>
        <dbReference type="ChEBI" id="CHEBI:29033"/>
    </cofactor>
    <text evidence="1">Binds 2 Fe(2+) ions per subunit.</text>
</comment>
<comment type="pathway">
    <text evidence="8">Lipid metabolism; fatty acid metabolism.</text>
</comment>
<comment type="subunit">
    <text evidence="2">Homodimer.</text>
</comment>
<comment type="subcellular location">
    <subcellularLocation>
        <location evidence="10">Cell surface</location>
    </subcellularLocation>
</comment>
<comment type="miscellaneous">
    <text evidence="4">Is a major B-cell antigen.</text>
</comment>
<comment type="miscellaneous">
    <text evidence="9">Was identified as a high-confidence drug target.</text>
</comment>
<comment type="similarity">
    <text evidence="7">Belongs to the fatty acid desaturase type 2 family.</text>
</comment>
<proteinExistence type="evidence at protein level"/>
<keyword id="KW-0275">Fatty acid biosynthesis</keyword>
<keyword id="KW-0276">Fatty acid metabolism</keyword>
<keyword id="KW-0408">Iron</keyword>
<keyword id="KW-0444">Lipid biosynthesis</keyword>
<keyword id="KW-0443">Lipid metabolism</keyword>
<keyword id="KW-0479">Metal-binding</keyword>
<keyword id="KW-0560">Oxidoreductase</keyword>
<keyword id="KW-1185">Reference proteome</keyword>
<organism>
    <name type="scientific">Mycobacterium tuberculosis (strain ATCC 25618 / H37Rv)</name>
    <dbReference type="NCBI Taxonomy" id="83332"/>
    <lineage>
        <taxon>Bacteria</taxon>
        <taxon>Bacillati</taxon>
        <taxon>Actinomycetota</taxon>
        <taxon>Actinomycetes</taxon>
        <taxon>Mycobacteriales</taxon>
        <taxon>Mycobacteriaceae</taxon>
        <taxon>Mycobacterium</taxon>
        <taxon>Mycobacterium tuberculosis complex</taxon>
    </lineage>
</organism>
<accession>P9WNZ7</accession>
<accession>L0T7U2</accession>
<accession>Q50824</accession>
<accession>Q79FV9</accession>
<accession>Q8VKD4</accession>